<accession>Q9I746</accession>
<dbReference type="EMBL" id="AE004091">
    <property type="protein sequence ID" value="AAG03476.1"/>
    <property type="molecule type" value="Genomic_DNA"/>
</dbReference>
<dbReference type="PIR" id="C83635">
    <property type="entry name" value="C83635"/>
</dbReference>
<dbReference type="RefSeq" id="NP_248776.1">
    <property type="nucleotide sequence ID" value="NC_002516.2"/>
</dbReference>
<dbReference type="RefSeq" id="WP_003119488.1">
    <property type="nucleotide sequence ID" value="NZ_QZGE01000015.1"/>
</dbReference>
<dbReference type="PDB" id="4UQX">
    <property type="method" value="X-ray"/>
    <property type="resolution" value="1.20 A"/>
    <property type="chains" value="A=21-281"/>
</dbReference>
<dbReference type="PDB" id="4UQY">
    <property type="method" value="X-ray"/>
    <property type="resolution" value="1.60 A"/>
    <property type="chains" value="A=21-281"/>
</dbReference>
<dbReference type="PDB" id="4UQZ">
    <property type="method" value="X-ray"/>
    <property type="resolution" value="1.60 A"/>
    <property type="chains" value="A=21-281"/>
</dbReference>
<dbReference type="PDBsum" id="4UQX"/>
<dbReference type="PDBsum" id="4UQY"/>
<dbReference type="PDBsum" id="4UQZ"/>
<dbReference type="SMR" id="Q9I746"/>
<dbReference type="STRING" id="208964.PA0086"/>
<dbReference type="PaxDb" id="208964-PA0086"/>
<dbReference type="DNASU" id="879504"/>
<dbReference type="GeneID" id="879504"/>
<dbReference type="KEGG" id="pae:PA0086"/>
<dbReference type="PATRIC" id="fig|208964.12.peg.90"/>
<dbReference type="PseudoCAP" id="PA0086"/>
<dbReference type="HOGENOM" id="CLU_087908_1_0_6"/>
<dbReference type="InParanoid" id="Q9I746"/>
<dbReference type="OrthoDB" id="5416084at2"/>
<dbReference type="PhylomeDB" id="Q9I746"/>
<dbReference type="BioCyc" id="PAER208964:G1FZ6-88-MONOMER"/>
<dbReference type="EvolutionaryTrace" id="Q9I746"/>
<dbReference type="Proteomes" id="UP000002438">
    <property type="component" value="Chromosome"/>
</dbReference>
<dbReference type="Gene3D" id="1.25.40.10">
    <property type="entry name" value="Tetratricopeptide repeat domain"/>
    <property type="match status" value="1"/>
</dbReference>
<dbReference type="InterPro" id="IPR009211">
    <property type="entry name" value="TagJ"/>
</dbReference>
<dbReference type="InterPro" id="IPR011990">
    <property type="entry name" value="TPR-like_helical_dom_sf"/>
</dbReference>
<dbReference type="Pfam" id="PF07024">
    <property type="entry name" value="ImpE"/>
    <property type="match status" value="1"/>
</dbReference>
<dbReference type="Pfam" id="PF14559">
    <property type="entry name" value="TPR_19"/>
    <property type="match status" value="1"/>
</dbReference>
<dbReference type="PIRSF" id="PIRSF029288">
    <property type="entry name" value="SciE_ImpE"/>
    <property type="match status" value="1"/>
</dbReference>
<dbReference type="SUPFAM" id="SSF144059">
    <property type="entry name" value="ImpE-like"/>
    <property type="match status" value="1"/>
</dbReference>
<reference key="1">
    <citation type="journal article" date="2000" name="Nature">
        <title>Complete genome sequence of Pseudomonas aeruginosa PAO1, an opportunistic pathogen.</title>
        <authorList>
            <person name="Stover C.K."/>
            <person name="Pham X.-Q.T."/>
            <person name="Erwin A.L."/>
            <person name="Mizoguchi S.D."/>
            <person name="Warrener P."/>
            <person name="Hickey M.J."/>
            <person name="Brinkman F.S.L."/>
            <person name="Hufnagle W.O."/>
            <person name="Kowalik D.J."/>
            <person name="Lagrou M."/>
            <person name="Garber R.L."/>
            <person name="Goltry L."/>
            <person name="Tolentino E."/>
            <person name="Westbrock-Wadman S."/>
            <person name="Yuan Y."/>
            <person name="Brody L.L."/>
            <person name="Coulter S.N."/>
            <person name="Folger K.R."/>
            <person name="Kas A."/>
            <person name="Larbig K."/>
            <person name="Lim R.M."/>
            <person name="Smith K.A."/>
            <person name="Spencer D.H."/>
            <person name="Wong G.K.-S."/>
            <person name="Wu Z."/>
            <person name="Paulsen I.T."/>
            <person name="Reizer J."/>
            <person name="Saier M.H. Jr."/>
            <person name="Hancock R.E.W."/>
            <person name="Lory S."/>
            <person name="Olson M.V."/>
        </authorList>
    </citation>
    <scope>NUCLEOTIDE SEQUENCE [LARGE SCALE GENOMIC DNA]</scope>
    <source>
        <strain>ATCC 15692 / DSM 22644 / CIP 104116 / JCM 14847 / LMG 12228 / 1C / PRS 101 / PAO1</strain>
    </source>
</reference>
<reference key="2">
    <citation type="journal article" date="2012" name="Mol. Microbiol.">
        <title>The archetype Pseudomonas aeruginosa proteins TssB and TagJ form a novel subcomplex in the bacterial type VI secretion system.</title>
        <authorList>
            <person name="Lossi N.S."/>
            <person name="Manoli E."/>
            <person name="Simpson P."/>
            <person name="Jones C."/>
            <person name="Hui K."/>
            <person name="Dajani R."/>
            <person name="Coulthurst S.J."/>
            <person name="Freemont P."/>
            <person name="Filloux A."/>
        </authorList>
    </citation>
    <scope>FUNCTION</scope>
    <scope>INTERACTION WITH TSSB1</scope>
    <scope>DISRUPTION PHENOTYPE</scope>
    <source>
        <strain>PAK</strain>
    </source>
</reference>
<reference evidence="5 6 7" key="3">
    <citation type="journal article" date="2014" name="J. Biol. Chem.">
        <title>Coevolution of the ATPase ClpV, the sheath proteins TssB and TssC, and the accessory protein TagJ/HsiE1 distinguishes type VI secretion classes.</title>
        <authorList>
            <person name="Foerster A."/>
            <person name="Planamente S."/>
            <person name="Manoli E."/>
            <person name="Lossi N.S."/>
            <person name="Freemont P.S."/>
            <person name="Filloux A."/>
        </authorList>
    </citation>
    <scope>X-RAY CRYSTALLOGRAPHY (1.20 ANGSTROMS) OF 21-281</scope>
    <scope>FUNCTION</scope>
    <scope>INTERACTION WITH TSSB1 AND CLPV1</scope>
</reference>
<name>TAGJ_PSEAE</name>
<comment type="function">
    <text evidence="1 2">Component of the H1 type VI (H1-T6SS) secretion system that plays a role in the release of toxins targeting both eukaryotic and prokaryotic species. Forms a stable complex with TssB1. This complex, although not crucial for the H1-T6SS function, may fine-tune the assembly of the system (PubMed:22906320). Plays a role in the interaction between ClpV1 and the TssC1/TssB1 sheath (PubMed:25305017).</text>
</comment>
<comment type="subunit">
    <text evidence="1 2">Interacts with TssB1 (via N-terminus) (PubMed:22906320, PubMed:25305017). Interacts with ClpV1 (PubMed:25305017).</text>
</comment>
<comment type="disruption phenotype">
    <text evidence="1">Deletion has no detectable effect on the T6SS-mediated secretion of VgrG1a/c, Hcp1 or Tse3.</text>
</comment>
<comment type="miscellaneous">
    <text evidence="4">The T6SS protein TagJ/HsiE1 is unique to the H1-T6SS and absent from the H2- and H3-T6SSs.</text>
</comment>
<protein>
    <recommendedName>
        <fullName evidence="3">Type VI secretion system accessory component TagJ</fullName>
    </recommendedName>
</protein>
<proteinExistence type="evidence at protein level"/>
<organism>
    <name type="scientific">Pseudomonas aeruginosa (strain ATCC 15692 / DSM 22644 / CIP 104116 / JCM 14847 / LMG 12228 / 1C / PRS 101 / PAO1)</name>
    <dbReference type="NCBI Taxonomy" id="208964"/>
    <lineage>
        <taxon>Bacteria</taxon>
        <taxon>Pseudomonadati</taxon>
        <taxon>Pseudomonadota</taxon>
        <taxon>Gammaproteobacteria</taxon>
        <taxon>Pseudomonadales</taxon>
        <taxon>Pseudomonadaceae</taxon>
        <taxon>Pseudomonas</taxon>
    </lineage>
</organism>
<feature type="chain" id="PRO_0000449260" description="Type VI secretion system accessory component TagJ">
    <location>
        <begin position="1"/>
        <end position="281"/>
    </location>
</feature>
<feature type="helix" evidence="8">
    <location>
        <begin position="22"/>
        <end position="28"/>
    </location>
</feature>
<feature type="helix" evidence="8">
    <location>
        <begin position="32"/>
        <end position="45"/>
    </location>
</feature>
<feature type="helix" evidence="8">
    <location>
        <begin position="50"/>
        <end position="62"/>
    </location>
</feature>
<feature type="helix" evidence="8">
    <location>
        <begin position="66"/>
        <end position="79"/>
    </location>
</feature>
<feature type="helix" evidence="8">
    <location>
        <begin position="81"/>
        <end position="83"/>
    </location>
</feature>
<feature type="helix" evidence="8">
    <location>
        <begin position="84"/>
        <end position="104"/>
    </location>
</feature>
<feature type="helix" evidence="8">
    <location>
        <begin position="120"/>
        <end position="131"/>
    </location>
</feature>
<feature type="helix" evidence="8">
    <location>
        <begin position="135"/>
        <end position="148"/>
    </location>
</feature>
<feature type="strand" evidence="8">
    <location>
        <begin position="154"/>
        <end position="156"/>
    </location>
</feature>
<feature type="strand" evidence="8">
    <location>
        <begin position="159"/>
        <end position="162"/>
    </location>
</feature>
<feature type="strand" evidence="8">
    <location>
        <begin position="164"/>
        <end position="168"/>
    </location>
</feature>
<feature type="turn" evidence="8">
    <location>
        <begin position="169"/>
        <end position="171"/>
    </location>
</feature>
<feature type="strand" evidence="8">
    <location>
        <begin position="172"/>
        <end position="179"/>
    </location>
</feature>
<feature type="strand" evidence="8">
    <location>
        <begin position="182"/>
        <end position="187"/>
    </location>
</feature>
<feature type="helix" evidence="8">
    <location>
        <begin position="188"/>
        <end position="190"/>
    </location>
</feature>
<feature type="strand" evidence="8">
    <location>
        <begin position="191"/>
        <end position="196"/>
    </location>
</feature>
<feature type="helix" evidence="8">
    <location>
        <begin position="202"/>
        <end position="205"/>
    </location>
</feature>
<feature type="strand" evidence="8">
    <location>
        <begin position="207"/>
        <end position="214"/>
    </location>
</feature>
<feature type="strand" evidence="8">
    <location>
        <begin position="219"/>
        <end position="225"/>
    </location>
</feature>
<feature type="helix" evidence="8">
    <location>
        <begin position="231"/>
        <end position="234"/>
    </location>
</feature>
<feature type="helix" evidence="8">
    <location>
        <begin position="237"/>
        <end position="240"/>
    </location>
</feature>
<feature type="strand" evidence="8">
    <location>
        <begin position="245"/>
        <end position="247"/>
    </location>
</feature>
<feature type="strand" evidence="8">
    <location>
        <begin position="253"/>
        <end position="256"/>
    </location>
</feature>
<feature type="strand" evidence="8">
    <location>
        <begin position="258"/>
        <end position="263"/>
    </location>
</feature>
<feature type="strand" evidence="8">
    <location>
        <begin position="265"/>
        <end position="267"/>
    </location>
</feature>
<feature type="helix" evidence="8">
    <location>
        <begin position="268"/>
        <end position="270"/>
    </location>
</feature>
<feature type="strand" evidence="8">
    <location>
        <begin position="273"/>
        <end position="276"/>
    </location>
</feature>
<sequence>MADPSFASGRLGSRLQGSIAMIAEELLRAGRLDDALKALQEQVRSQPSNATLRIFLFQLLAVMGQWARAQNQLKVVGELDASALPMVQTYSTAIDCEALRREVFAGRLTPVILGQPAEWIAPLLQALSLDAEGHGEAAQALREQAFDAAPAVPGRIGEAPFAWLADADTRLGPVLEVIVNGRYAWLPMSNLRSLKVEAPSDLRDLVWLPAELTLANGGATVALLPARYAETVEHGDDAARLGRKTEWLDSGLPVGQRLFVTDAGETALFDLRELDFEPTDA</sequence>
<keyword id="KW-0002">3D-structure</keyword>
<keyword id="KW-1185">Reference proteome</keyword>
<gene>
    <name evidence="3" type="primary">tagJ</name>
    <name type="ordered locus">PA0086</name>
</gene>
<evidence type="ECO:0000269" key="1">
    <source>
    </source>
</evidence>
<evidence type="ECO:0000269" key="2">
    <source>
    </source>
</evidence>
<evidence type="ECO:0000303" key="3">
    <source>
    </source>
</evidence>
<evidence type="ECO:0000305" key="4">
    <source>
    </source>
</evidence>
<evidence type="ECO:0007744" key="5">
    <source>
        <dbReference type="PDB" id="4UQX"/>
    </source>
</evidence>
<evidence type="ECO:0007744" key="6">
    <source>
        <dbReference type="PDB" id="4UQY"/>
    </source>
</evidence>
<evidence type="ECO:0007744" key="7">
    <source>
        <dbReference type="PDB" id="4UQZ"/>
    </source>
</evidence>
<evidence type="ECO:0007829" key="8">
    <source>
        <dbReference type="PDB" id="4UQX"/>
    </source>
</evidence>